<organism>
    <name type="scientific">Staphylococcus epidermidis (strain ATCC 35984 / DSM 28319 / BCRC 17069 / CCUG 31568 / BM 3577 / RP62A)</name>
    <dbReference type="NCBI Taxonomy" id="176279"/>
    <lineage>
        <taxon>Bacteria</taxon>
        <taxon>Bacillati</taxon>
        <taxon>Bacillota</taxon>
        <taxon>Bacilli</taxon>
        <taxon>Bacillales</taxon>
        <taxon>Staphylococcaceae</taxon>
        <taxon>Staphylococcus</taxon>
    </lineage>
</organism>
<proteinExistence type="inferred from homology"/>
<sequence length="421" mass="47643">MANALIEDLKWRGLIYQQTDEEGIEELLNKEQVTLYCGADPTADSLHIGHLLPFLTLRRFQEHGHRPIVLIGGGTGMIGDPSGKSEERVLQTESQVEANVKGLSNQMHRLFEFGSDKGAKLVNNKDWLGQISLISFLRDYGKHVGVNYMLGKDSIQTRLEHGISYTEFTYTILQAIDFGYLNRELNCKIQVGGSDQWGNITSGIELMRRMYGQTEAYGLTIPLVTKSDGKKFGKSESGAVWLDPEKTSPYEFYQFWINQSDEDVIKFLKYFTFLEKEEINRLEQSKNEAPHLREAQKALAENVTKFIHGEAALKDAIRISKALFSGDLKSLSAKELKEGFKDVPQVTLSTKTTNIVEALIETGIASSKRQAREDVNNGAIYINGERQQSVDYELSSKDLIEDEITIIRRGKKKYFMVNYQS</sequence>
<keyword id="KW-0030">Aminoacyl-tRNA synthetase</keyword>
<keyword id="KW-0067">ATP-binding</keyword>
<keyword id="KW-0963">Cytoplasm</keyword>
<keyword id="KW-0436">Ligase</keyword>
<keyword id="KW-0547">Nucleotide-binding</keyword>
<keyword id="KW-0648">Protein biosynthesis</keyword>
<keyword id="KW-1185">Reference proteome</keyword>
<keyword id="KW-0694">RNA-binding</keyword>
<name>SYY_STAEQ</name>
<feature type="chain" id="PRO_0000234781" description="Tyrosine--tRNA ligase">
    <location>
        <begin position="1"/>
        <end position="421"/>
    </location>
</feature>
<feature type="domain" description="S4 RNA-binding" evidence="1">
    <location>
        <begin position="353"/>
        <end position="420"/>
    </location>
</feature>
<feature type="short sequence motif" description="'HIGH' region">
    <location>
        <begin position="41"/>
        <end position="50"/>
    </location>
</feature>
<feature type="short sequence motif" description="'KMSKS' region">
    <location>
        <begin position="231"/>
        <end position="235"/>
    </location>
</feature>
<feature type="binding site" evidence="1">
    <location>
        <position position="36"/>
    </location>
    <ligand>
        <name>L-tyrosine</name>
        <dbReference type="ChEBI" id="CHEBI:58315"/>
    </ligand>
</feature>
<feature type="binding site" evidence="1">
    <location>
        <position position="170"/>
    </location>
    <ligand>
        <name>L-tyrosine</name>
        <dbReference type="ChEBI" id="CHEBI:58315"/>
    </ligand>
</feature>
<feature type="binding site" evidence="1">
    <location>
        <position position="174"/>
    </location>
    <ligand>
        <name>L-tyrosine</name>
        <dbReference type="ChEBI" id="CHEBI:58315"/>
    </ligand>
</feature>
<feature type="binding site" evidence="1">
    <location>
        <position position="234"/>
    </location>
    <ligand>
        <name>ATP</name>
        <dbReference type="ChEBI" id="CHEBI:30616"/>
    </ligand>
</feature>
<accession>Q5HNH6</accession>
<comment type="function">
    <text evidence="1">Catalyzes the attachment of tyrosine to tRNA(Tyr) in a two-step reaction: tyrosine is first activated by ATP to form Tyr-AMP and then transferred to the acceptor end of tRNA(Tyr).</text>
</comment>
<comment type="catalytic activity">
    <reaction evidence="1">
        <text>tRNA(Tyr) + L-tyrosine + ATP = L-tyrosyl-tRNA(Tyr) + AMP + diphosphate + H(+)</text>
        <dbReference type="Rhea" id="RHEA:10220"/>
        <dbReference type="Rhea" id="RHEA-COMP:9706"/>
        <dbReference type="Rhea" id="RHEA-COMP:9707"/>
        <dbReference type="ChEBI" id="CHEBI:15378"/>
        <dbReference type="ChEBI" id="CHEBI:30616"/>
        <dbReference type="ChEBI" id="CHEBI:33019"/>
        <dbReference type="ChEBI" id="CHEBI:58315"/>
        <dbReference type="ChEBI" id="CHEBI:78442"/>
        <dbReference type="ChEBI" id="CHEBI:78536"/>
        <dbReference type="ChEBI" id="CHEBI:456215"/>
        <dbReference type="EC" id="6.1.1.1"/>
    </reaction>
</comment>
<comment type="subunit">
    <text evidence="1">Homodimer.</text>
</comment>
<comment type="subcellular location">
    <subcellularLocation>
        <location evidence="1">Cytoplasm</location>
    </subcellularLocation>
</comment>
<comment type="similarity">
    <text evidence="1">Belongs to the class-I aminoacyl-tRNA synthetase family. TyrS type 1 subfamily.</text>
</comment>
<gene>
    <name evidence="1" type="primary">tyrS</name>
    <name type="ordered locus">SERP1293</name>
</gene>
<reference key="1">
    <citation type="journal article" date="2005" name="J. Bacteriol.">
        <title>Insights on evolution of virulence and resistance from the complete genome analysis of an early methicillin-resistant Staphylococcus aureus strain and a biofilm-producing methicillin-resistant Staphylococcus epidermidis strain.</title>
        <authorList>
            <person name="Gill S.R."/>
            <person name="Fouts D.E."/>
            <person name="Archer G.L."/>
            <person name="Mongodin E.F."/>
            <person name="DeBoy R.T."/>
            <person name="Ravel J."/>
            <person name="Paulsen I.T."/>
            <person name="Kolonay J.F."/>
            <person name="Brinkac L.M."/>
            <person name="Beanan M.J."/>
            <person name="Dodson R.J."/>
            <person name="Daugherty S.C."/>
            <person name="Madupu R."/>
            <person name="Angiuoli S.V."/>
            <person name="Durkin A.S."/>
            <person name="Haft D.H."/>
            <person name="Vamathevan J.J."/>
            <person name="Khouri H."/>
            <person name="Utterback T.R."/>
            <person name="Lee C."/>
            <person name="Dimitrov G."/>
            <person name="Jiang L."/>
            <person name="Qin H."/>
            <person name="Weidman J."/>
            <person name="Tran K."/>
            <person name="Kang K.H."/>
            <person name="Hance I.R."/>
            <person name="Nelson K.E."/>
            <person name="Fraser C.M."/>
        </authorList>
    </citation>
    <scope>NUCLEOTIDE SEQUENCE [LARGE SCALE GENOMIC DNA]</scope>
    <source>
        <strain>ATCC 35984 / DSM 28319 / BCRC 17069 / CCUG 31568 / BM 3577 / RP62A</strain>
    </source>
</reference>
<evidence type="ECO:0000255" key="1">
    <source>
        <dbReference type="HAMAP-Rule" id="MF_02006"/>
    </source>
</evidence>
<protein>
    <recommendedName>
        <fullName evidence="1">Tyrosine--tRNA ligase</fullName>
        <ecNumber evidence="1">6.1.1.1</ecNumber>
    </recommendedName>
    <alternativeName>
        <fullName evidence="1">Tyrosyl-tRNA synthetase</fullName>
        <shortName evidence="1">TyrRS</shortName>
    </alternativeName>
</protein>
<dbReference type="EC" id="6.1.1.1" evidence="1"/>
<dbReference type="EMBL" id="CP000029">
    <property type="protein sequence ID" value="AAW54701.1"/>
    <property type="molecule type" value="Genomic_DNA"/>
</dbReference>
<dbReference type="RefSeq" id="WP_001830858.1">
    <property type="nucleotide sequence ID" value="NC_002976.3"/>
</dbReference>
<dbReference type="SMR" id="Q5HNH6"/>
<dbReference type="STRING" id="176279.SERP1293"/>
<dbReference type="GeneID" id="50018483"/>
<dbReference type="KEGG" id="ser:SERP1293"/>
<dbReference type="eggNOG" id="COG0162">
    <property type="taxonomic scope" value="Bacteria"/>
</dbReference>
<dbReference type="HOGENOM" id="CLU_024003_0_3_9"/>
<dbReference type="Proteomes" id="UP000000531">
    <property type="component" value="Chromosome"/>
</dbReference>
<dbReference type="GO" id="GO:0005829">
    <property type="term" value="C:cytosol"/>
    <property type="evidence" value="ECO:0007669"/>
    <property type="project" value="TreeGrafter"/>
</dbReference>
<dbReference type="GO" id="GO:0005524">
    <property type="term" value="F:ATP binding"/>
    <property type="evidence" value="ECO:0007669"/>
    <property type="project" value="UniProtKB-UniRule"/>
</dbReference>
<dbReference type="GO" id="GO:0003723">
    <property type="term" value="F:RNA binding"/>
    <property type="evidence" value="ECO:0007669"/>
    <property type="project" value="UniProtKB-KW"/>
</dbReference>
<dbReference type="GO" id="GO:0004831">
    <property type="term" value="F:tyrosine-tRNA ligase activity"/>
    <property type="evidence" value="ECO:0007669"/>
    <property type="project" value="UniProtKB-UniRule"/>
</dbReference>
<dbReference type="GO" id="GO:0006437">
    <property type="term" value="P:tyrosyl-tRNA aminoacylation"/>
    <property type="evidence" value="ECO:0007669"/>
    <property type="project" value="UniProtKB-UniRule"/>
</dbReference>
<dbReference type="CDD" id="cd00165">
    <property type="entry name" value="S4"/>
    <property type="match status" value="1"/>
</dbReference>
<dbReference type="CDD" id="cd00395">
    <property type="entry name" value="Tyr_Trp_RS_core"/>
    <property type="match status" value="1"/>
</dbReference>
<dbReference type="FunFam" id="1.10.240.10:FF:000001">
    <property type="entry name" value="Tyrosine--tRNA ligase"/>
    <property type="match status" value="1"/>
</dbReference>
<dbReference type="FunFam" id="3.40.50.620:FF:000008">
    <property type="entry name" value="Tyrosine--tRNA ligase"/>
    <property type="match status" value="1"/>
</dbReference>
<dbReference type="Gene3D" id="3.40.50.620">
    <property type="entry name" value="HUPs"/>
    <property type="match status" value="1"/>
</dbReference>
<dbReference type="Gene3D" id="3.10.290.10">
    <property type="entry name" value="RNA-binding S4 domain"/>
    <property type="match status" value="1"/>
</dbReference>
<dbReference type="Gene3D" id="1.10.240.10">
    <property type="entry name" value="Tyrosyl-Transfer RNA Synthetase"/>
    <property type="match status" value="1"/>
</dbReference>
<dbReference type="HAMAP" id="MF_02006">
    <property type="entry name" value="Tyr_tRNA_synth_type1"/>
    <property type="match status" value="1"/>
</dbReference>
<dbReference type="InterPro" id="IPR001412">
    <property type="entry name" value="aa-tRNA-synth_I_CS"/>
</dbReference>
<dbReference type="InterPro" id="IPR002305">
    <property type="entry name" value="aa-tRNA-synth_Ic"/>
</dbReference>
<dbReference type="InterPro" id="IPR014729">
    <property type="entry name" value="Rossmann-like_a/b/a_fold"/>
</dbReference>
<dbReference type="InterPro" id="IPR002942">
    <property type="entry name" value="S4_RNA-bd"/>
</dbReference>
<dbReference type="InterPro" id="IPR036986">
    <property type="entry name" value="S4_RNA-bd_sf"/>
</dbReference>
<dbReference type="InterPro" id="IPR054608">
    <property type="entry name" value="SYY-like_C"/>
</dbReference>
<dbReference type="InterPro" id="IPR002307">
    <property type="entry name" value="Tyr-tRNA-ligase"/>
</dbReference>
<dbReference type="InterPro" id="IPR024088">
    <property type="entry name" value="Tyr-tRNA-ligase_bac-type"/>
</dbReference>
<dbReference type="InterPro" id="IPR024107">
    <property type="entry name" value="Tyr-tRNA-ligase_bac_1"/>
</dbReference>
<dbReference type="NCBIfam" id="TIGR00234">
    <property type="entry name" value="tyrS"/>
    <property type="match status" value="1"/>
</dbReference>
<dbReference type="PANTHER" id="PTHR11766:SF0">
    <property type="entry name" value="TYROSINE--TRNA LIGASE, MITOCHONDRIAL"/>
    <property type="match status" value="1"/>
</dbReference>
<dbReference type="PANTHER" id="PTHR11766">
    <property type="entry name" value="TYROSYL-TRNA SYNTHETASE"/>
    <property type="match status" value="1"/>
</dbReference>
<dbReference type="Pfam" id="PF22421">
    <property type="entry name" value="SYY_C-terminal"/>
    <property type="match status" value="1"/>
</dbReference>
<dbReference type="Pfam" id="PF00579">
    <property type="entry name" value="tRNA-synt_1b"/>
    <property type="match status" value="1"/>
</dbReference>
<dbReference type="PRINTS" id="PR01040">
    <property type="entry name" value="TRNASYNTHTYR"/>
</dbReference>
<dbReference type="SMART" id="SM00363">
    <property type="entry name" value="S4"/>
    <property type="match status" value="1"/>
</dbReference>
<dbReference type="SUPFAM" id="SSF55174">
    <property type="entry name" value="Alpha-L RNA-binding motif"/>
    <property type="match status" value="1"/>
</dbReference>
<dbReference type="SUPFAM" id="SSF52374">
    <property type="entry name" value="Nucleotidylyl transferase"/>
    <property type="match status" value="1"/>
</dbReference>
<dbReference type="PROSITE" id="PS00178">
    <property type="entry name" value="AA_TRNA_LIGASE_I"/>
    <property type="match status" value="1"/>
</dbReference>
<dbReference type="PROSITE" id="PS50889">
    <property type="entry name" value="S4"/>
    <property type="match status" value="1"/>
</dbReference>